<protein>
    <recommendedName>
        <fullName evidence="1">2,3-bisphosphoglycerate-independent phosphoglycerate mutase</fullName>
        <shortName evidence="1">BPG-independent PGAM</shortName>
        <shortName evidence="1">Phosphoglyceromutase</shortName>
        <shortName evidence="1">iPGM</shortName>
        <ecNumber evidence="1">5.4.2.12</ecNumber>
    </recommendedName>
</protein>
<reference key="1">
    <citation type="submission" date="2007-06" db="EMBL/GenBank/DDBJ databases">
        <authorList>
            <person name="Brinkac L.M."/>
            <person name="Daugherty S."/>
            <person name="Dodson R.J."/>
            <person name="Madupu R."/>
            <person name="Brown J.L."/>
            <person name="Bruce D."/>
            <person name="Detter C."/>
            <person name="Munk C."/>
            <person name="Smith L.A."/>
            <person name="Smith T.J."/>
            <person name="White O."/>
            <person name="Brettin T.S."/>
        </authorList>
    </citation>
    <scope>NUCLEOTIDE SEQUENCE [LARGE SCALE GENOMIC DNA]</scope>
    <source>
        <strain>Langeland / NCTC 10281 / Type F</strain>
    </source>
</reference>
<dbReference type="EC" id="5.4.2.12" evidence="1"/>
<dbReference type="EMBL" id="CP000728">
    <property type="protein sequence ID" value="ABS39713.1"/>
    <property type="molecule type" value="Genomic_DNA"/>
</dbReference>
<dbReference type="RefSeq" id="WP_011987292.1">
    <property type="nucleotide sequence ID" value="NC_009699.1"/>
</dbReference>
<dbReference type="SMR" id="A7G9Y2"/>
<dbReference type="KEGG" id="cbf:CLI_0294"/>
<dbReference type="HOGENOM" id="CLU_026099_2_0_9"/>
<dbReference type="UniPathway" id="UPA00109">
    <property type="reaction ID" value="UER00186"/>
</dbReference>
<dbReference type="Proteomes" id="UP000002410">
    <property type="component" value="Chromosome"/>
</dbReference>
<dbReference type="GO" id="GO:0005829">
    <property type="term" value="C:cytosol"/>
    <property type="evidence" value="ECO:0007669"/>
    <property type="project" value="TreeGrafter"/>
</dbReference>
<dbReference type="GO" id="GO:0030145">
    <property type="term" value="F:manganese ion binding"/>
    <property type="evidence" value="ECO:0007669"/>
    <property type="project" value="UniProtKB-UniRule"/>
</dbReference>
<dbReference type="GO" id="GO:0004619">
    <property type="term" value="F:phosphoglycerate mutase activity"/>
    <property type="evidence" value="ECO:0007669"/>
    <property type="project" value="UniProtKB-EC"/>
</dbReference>
<dbReference type="GO" id="GO:0006007">
    <property type="term" value="P:glucose catabolic process"/>
    <property type="evidence" value="ECO:0007669"/>
    <property type="project" value="InterPro"/>
</dbReference>
<dbReference type="GO" id="GO:0006096">
    <property type="term" value="P:glycolytic process"/>
    <property type="evidence" value="ECO:0007669"/>
    <property type="project" value="UniProtKB-UniRule"/>
</dbReference>
<dbReference type="CDD" id="cd16010">
    <property type="entry name" value="iPGM"/>
    <property type="match status" value="1"/>
</dbReference>
<dbReference type="FunFam" id="3.40.1450.10:FF:000001">
    <property type="entry name" value="2,3-bisphosphoglycerate-independent phosphoglycerate mutase"/>
    <property type="match status" value="1"/>
</dbReference>
<dbReference type="FunFam" id="3.40.720.10:FF:000001">
    <property type="entry name" value="2,3-bisphosphoglycerate-independent phosphoglycerate mutase"/>
    <property type="match status" value="1"/>
</dbReference>
<dbReference type="Gene3D" id="3.40.720.10">
    <property type="entry name" value="Alkaline Phosphatase, subunit A"/>
    <property type="match status" value="1"/>
</dbReference>
<dbReference type="Gene3D" id="3.40.1450.10">
    <property type="entry name" value="BPG-independent phosphoglycerate mutase, domain B"/>
    <property type="match status" value="1"/>
</dbReference>
<dbReference type="HAMAP" id="MF_01038">
    <property type="entry name" value="GpmI"/>
    <property type="match status" value="1"/>
</dbReference>
<dbReference type="InterPro" id="IPR017850">
    <property type="entry name" value="Alkaline_phosphatase_core_sf"/>
</dbReference>
<dbReference type="InterPro" id="IPR011258">
    <property type="entry name" value="BPG-indep_PGM_N"/>
</dbReference>
<dbReference type="InterPro" id="IPR006124">
    <property type="entry name" value="Metalloenzyme"/>
</dbReference>
<dbReference type="InterPro" id="IPR036646">
    <property type="entry name" value="PGAM_B_sf"/>
</dbReference>
<dbReference type="InterPro" id="IPR005995">
    <property type="entry name" value="Pgm_bpd_ind"/>
</dbReference>
<dbReference type="NCBIfam" id="TIGR01307">
    <property type="entry name" value="pgm_bpd_ind"/>
    <property type="match status" value="1"/>
</dbReference>
<dbReference type="PANTHER" id="PTHR31637">
    <property type="entry name" value="2,3-BISPHOSPHOGLYCERATE-INDEPENDENT PHOSPHOGLYCERATE MUTASE"/>
    <property type="match status" value="1"/>
</dbReference>
<dbReference type="PANTHER" id="PTHR31637:SF0">
    <property type="entry name" value="2,3-BISPHOSPHOGLYCERATE-INDEPENDENT PHOSPHOGLYCERATE MUTASE"/>
    <property type="match status" value="1"/>
</dbReference>
<dbReference type="Pfam" id="PF06415">
    <property type="entry name" value="iPGM_N"/>
    <property type="match status" value="1"/>
</dbReference>
<dbReference type="Pfam" id="PF01676">
    <property type="entry name" value="Metalloenzyme"/>
    <property type="match status" value="1"/>
</dbReference>
<dbReference type="PIRSF" id="PIRSF001492">
    <property type="entry name" value="IPGAM"/>
    <property type="match status" value="1"/>
</dbReference>
<dbReference type="SUPFAM" id="SSF64158">
    <property type="entry name" value="2,3-Bisphosphoglycerate-independent phosphoglycerate mutase, substrate-binding domain"/>
    <property type="match status" value="1"/>
</dbReference>
<dbReference type="SUPFAM" id="SSF53649">
    <property type="entry name" value="Alkaline phosphatase-like"/>
    <property type="match status" value="1"/>
</dbReference>
<keyword id="KW-0324">Glycolysis</keyword>
<keyword id="KW-0413">Isomerase</keyword>
<keyword id="KW-0464">Manganese</keyword>
<keyword id="KW-0479">Metal-binding</keyword>
<evidence type="ECO:0000255" key="1">
    <source>
        <dbReference type="HAMAP-Rule" id="MF_01038"/>
    </source>
</evidence>
<comment type="function">
    <text evidence="1">Catalyzes the interconversion of 2-phosphoglycerate and 3-phosphoglycerate.</text>
</comment>
<comment type="catalytic activity">
    <reaction evidence="1">
        <text>(2R)-2-phosphoglycerate = (2R)-3-phosphoglycerate</text>
        <dbReference type="Rhea" id="RHEA:15901"/>
        <dbReference type="ChEBI" id="CHEBI:58272"/>
        <dbReference type="ChEBI" id="CHEBI:58289"/>
        <dbReference type="EC" id="5.4.2.12"/>
    </reaction>
</comment>
<comment type="cofactor">
    <cofactor evidence="1">
        <name>Mn(2+)</name>
        <dbReference type="ChEBI" id="CHEBI:29035"/>
    </cofactor>
    <text evidence="1">Binds 2 manganese ions per subunit.</text>
</comment>
<comment type="pathway">
    <text evidence="1">Carbohydrate degradation; glycolysis; pyruvate from D-glyceraldehyde 3-phosphate: step 3/5.</text>
</comment>
<comment type="subunit">
    <text evidence="1">Monomer.</text>
</comment>
<comment type="similarity">
    <text evidence="1">Belongs to the BPG-independent phosphoglycerate mutase family.</text>
</comment>
<name>GPMI_CLOBL</name>
<sequence length="509" mass="56524">MSKKPVVLMILDGFGLTNKVDGNAVSAANKPNLDNILKKYPHTQLGASGMDVGLPEGQMGNSEVGHLNIGAGRIVYQALTKITKSISDGDFFENVALNKAIENAKKNNSTLHLLGLLSPGGVHSHIDHLKGLIKLAKEKDIKKVYIHAFLDGRDVAPSSAKEYIEDIEIYMQEIGVGEIATISGRYYAMDRDKRWERVQLCYNAIVLGKGEEANSAVEGLEKSYRDNKTDEFVLPSVVLKEGKPKAKIENKDSVVFFNFRPDRARELTRAINDKVFDGFERETLDLTYVTMTEYDSTLENVEVAFPPEHLNNTLGEYVSKNGKKQLRIAETEKYAHVTFFFNGGVEEPNEGEDRVLIPSPKVATYDMQPEMNAYEVTDKLLERLDEDKYDMVILNFANPDMVGHTGVFEAAKKAIETVDECVGKIVNKVLEKDGTAFITADHGNSEEMIDYSTGKPMTAHTTNPVPFMYVSNDSKELREGGKLADIAPTMLQLMNLPKPSEMTGNSLIK</sequence>
<feature type="chain" id="PRO_1000063954" description="2,3-bisphosphoglycerate-independent phosphoglycerate mutase">
    <location>
        <begin position="1"/>
        <end position="509"/>
    </location>
</feature>
<feature type="active site" description="Phosphoserine intermediate" evidence="1">
    <location>
        <position position="62"/>
    </location>
</feature>
<feature type="binding site" evidence="1">
    <location>
        <position position="12"/>
    </location>
    <ligand>
        <name>Mn(2+)</name>
        <dbReference type="ChEBI" id="CHEBI:29035"/>
        <label>2</label>
    </ligand>
</feature>
<feature type="binding site" evidence="1">
    <location>
        <position position="62"/>
    </location>
    <ligand>
        <name>Mn(2+)</name>
        <dbReference type="ChEBI" id="CHEBI:29035"/>
        <label>2</label>
    </ligand>
</feature>
<feature type="binding site" evidence="1">
    <location>
        <position position="123"/>
    </location>
    <ligand>
        <name>substrate</name>
    </ligand>
</feature>
<feature type="binding site" evidence="1">
    <location>
        <begin position="153"/>
        <end position="154"/>
    </location>
    <ligand>
        <name>substrate</name>
    </ligand>
</feature>
<feature type="binding site" evidence="1">
    <location>
        <position position="185"/>
    </location>
    <ligand>
        <name>substrate</name>
    </ligand>
</feature>
<feature type="binding site" evidence="1">
    <location>
        <position position="191"/>
    </location>
    <ligand>
        <name>substrate</name>
    </ligand>
</feature>
<feature type="binding site" evidence="1">
    <location>
        <begin position="260"/>
        <end position="263"/>
    </location>
    <ligand>
        <name>substrate</name>
    </ligand>
</feature>
<feature type="binding site" evidence="1">
    <location>
        <position position="333"/>
    </location>
    <ligand>
        <name>substrate</name>
    </ligand>
</feature>
<feature type="binding site" evidence="1">
    <location>
        <position position="400"/>
    </location>
    <ligand>
        <name>Mn(2+)</name>
        <dbReference type="ChEBI" id="CHEBI:29035"/>
        <label>1</label>
    </ligand>
</feature>
<feature type="binding site" evidence="1">
    <location>
        <position position="404"/>
    </location>
    <ligand>
        <name>Mn(2+)</name>
        <dbReference type="ChEBI" id="CHEBI:29035"/>
        <label>1</label>
    </ligand>
</feature>
<feature type="binding site" evidence="1">
    <location>
        <position position="441"/>
    </location>
    <ligand>
        <name>Mn(2+)</name>
        <dbReference type="ChEBI" id="CHEBI:29035"/>
        <label>2</label>
    </ligand>
</feature>
<feature type="binding site" evidence="1">
    <location>
        <position position="442"/>
    </location>
    <ligand>
        <name>Mn(2+)</name>
        <dbReference type="ChEBI" id="CHEBI:29035"/>
        <label>2</label>
    </ligand>
</feature>
<feature type="binding site" evidence="1">
    <location>
        <position position="460"/>
    </location>
    <ligand>
        <name>Mn(2+)</name>
        <dbReference type="ChEBI" id="CHEBI:29035"/>
        <label>1</label>
    </ligand>
</feature>
<accession>A7G9Y2</accession>
<gene>
    <name evidence="1" type="primary">gpmI</name>
    <name type="ordered locus">CLI_0294</name>
</gene>
<proteinExistence type="inferred from homology"/>
<organism>
    <name type="scientific">Clostridium botulinum (strain Langeland / NCTC 10281 / Type F)</name>
    <dbReference type="NCBI Taxonomy" id="441772"/>
    <lineage>
        <taxon>Bacteria</taxon>
        <taxon>Bacillati</taxon>
        <taxon>Bacillota</taxon>
        <taxon>Clostridia</taxon>
        <taxon>Eubacteriales</taxon>
        <taxon>Clostridiaceae</taxon>
        <taxon>Clostridium</taxon>
    </lineage>
</organism>